<keyword id="KW-0378">Hydrolase</keyword>
<keyword id="KW-1185">Reference proteome</keyword>
<proteinExistence type="inferred from homology"/>
<organism>
    <name type="scientific">Gibberella zeae (strain ATCC MYA-4620 / CBS 123657 / FGSC 9075 / NRRL 31084 / PH-1)</name>
    <name type="common">Wheat head blight fungus</name>
    <name type="synonym">Fusarium graminearum</name>
    <dbReference type="NCBI Taxonomy" id="229533"/>
    <lineage>
        <taxon>Eukaryota</taxon>
        <taxon>Fungi</taxon>
        <taxon>Dikarya</taxon>
        <taxon>Ascomycota</taxon>
        <taxon>Pezizomycotina</taxon>
        <taxon>Sordariomycetes</taxon>
        <taxon>Hypocreomycetidae</taxon>
        <taxon>Hypocreales</taxon>
        <taxon>Nectriaceae</taxon>
        <taxon>Fusarium</taxon>
    </lineage>
</organism>
<name>GRA12_GIBZE</name>
<accession>I1R9B2</accession>
<accession>A0A098CZ21</accession>
<reference key="1">
    <citation type="journal article" date="2007" name="Science">
        <title>The Fusarium graminearum genome reveals a link between localized polymorphism and pathogen specialization.</title>
        <authorList>
            <person name="Cuomo C.A."/>
            <person name="Gueldener U."/>
            <person name="Xu J.-R."/>
            <person name="Trail F."/>
            <person name="Turgeon B.G."/>
            <person name="Di Pietro A."/>
            <person name="Walton J.D."/>
            <person name="Ma L.-J."/>
            <person name="Baker S.E."/>
            <person name="Rep M."/>
            <person name="Adam G."/>
            <person name="Antoniw J."/>
            <person name="Baldwin T."/>
            <person name="Calvo S.E."/>
            <person name="Chang Y.-L."/>
            <person name="DeCaprio D."/>
            <person name="Gale L.R."/>
            <person name="Gnerre S."/>
            <person name="Goswami R.S."/>
            <person name="Hammond-Kosack K."/>
            <person name="Harris L.J."/>
            <person name="Hilburn K."/>
            <person name="Kennell J.C."/>
            <person name="Kroken S."/>
            <person name="Magnuson J.K."/>
            <person name="Mannhaupt G."/>
            <person name="Mauceli E.W."/>
            <person name="Mewes H.-W."/>
            <person name="Mitterbauer R."/>
            <person name="Muehlbauer G."/>
            <person name="Muensterkoetter M."/>
            <person name="Nelson D."/>
            <person name="O'Donnell K."/>
            <person name="Ouellet T."/>
            <person name="Qi W."/>
            <person name="Quesneville H."/>
            <person name="Roncero M.I.G."/>
            <person name="Seong K.-Y."/>
            <person name="Tetko I.V."/>
            <person name="Urban M."/>
            <person name="Waalwijk C."/>
            <person name="Ward T.J."/>
            <person name="Yao J."/>
            <person name="Birren B.W."/>
            <person name="Kistler H.C."/>
        </authorList>
    </citation>
    <scope>NUCLEOTIDE SEQUENCE [LARGE SCALE GENOMIC DNA]</scope>
    <source>
        <strain>ATCC MYA-4620 / CBS 123657 / FGSC 9075 / NRRL 31084 / PH-1</strain>
    </source>
</reference>
<reference key="2">
    <citation type="journal article" date="2010" name="Nature">
        <title>Comparative genomics reveals mobile pathogenicity chromosomes in Fusarium.</title>
        <authorList>
            <person name="Ma L.-J."/>
            <person name="van der Does H.C."/>
            <person name="Borkovich K.A."/>
            <person name="Coleman J.J."/>
            <person name="Daboussi M.-J."/>
            <person name="Di Pietro A."/>
            <person name="Dufresne M."/>
            <person name="Freitag M."/>
            <person name="Grabherr M."/>
            <person name="Henrissat B."/>
            <person name="Houterman P.M."/>
            <person name="Kang S."/>
            <person name="Shim W.-B."/>
            <person name="Woloshuk C."/>
            <person name="Xie X."/>
            <person name="Xu J.-R."/>
            <person name="Antoniw J."/>
            <person name="Baker S.E."/>
            <person name="Bluhm B.H."/>
            <person name="Breakspear A."/>
            <person name="Brown D.W."/>
            <person name="Butchko R.A.E."/>
            <person name="Chapman S."/>
            <person name="Coulson R."/>
            <person name="Coutinho P.M."/>
            <person name="Danchin E.G.J."/>
            <person name="Diener A."/>
            <person name="Gale L.R."/>
            <person name="Gardiner D.M."/>
            <person name="Goff S."/>
            <person name="Hammond-Kosack K.E."/>
            <person name="Hilburn K."/>
            <person name="Hua-Van A."/>
            <person name="Jonkers W."/>
            <person name="Kazan K."/>
            <person name="Kodira C.D."/>
            <person name="Koehrsen M."/>
            <person name="Kumar L."/>
            <person name="Lee Y.-H."/>
            <person name="Li L."/>
            <person name="Manners J.M."/>
            <person name="Miranda-Saavedra D."/>
            <person name="Mukherjee M."/>
            <person name="Park G."/>
            <person name="Park J."/>
            <person name="Park S.-Y."/>
            <person name="Proctor R.H."/>
            <person name="Regev A."/>
            <person name="Ruiz-Roldan M.C."/>
            <person name="Sain D."/>
            <person name="Sakthikumar S."/>
            <person name="Sykes S."/>
            <person name="Schwartz D.C."/>
            <person name="Turgeon B.G."/>
            <person name="Wapinski I."/>
            <person name="Yoder O."/>
            <person name="Young S."/>
            <person name="Zeng Q."/>
            <person name="Zhou S."/>
            <person name="Galagan J."/>
            <person name="Cuomo C.A."/>
            <person name="Kistler H.C."/>
            <person name="Rep M."/>
        </authorList>
    </citation>
    <scope>GENOME REANNOTATION</scope>
    <source>
        <strain>ATCC MYA-4620 / CBS 123657 / FGSC 9075 / NRRL 31084 / PH-1</strain>
    </source>
</reference>
<reference key="3">
    <citation type="journal article" date="2015" name="BMC Genomics">
        <title>The completed genome sequence of the pathogenic ascomycete fungus Fusarium graminearum.</title>
        <authorList>
            <person name="King R."/>
            <person name="Urban M."/>
            <person name="Hammond-Kosack M.C.U."/>
            <person name="Hassani-Pak K."/>
            <person name="Hammond-Kosack K.E."/>
        </authorList>
    </citation>
    <scope>NUCLEOTIDE SEQUENCE [LARGE SCALE GENOMIC DNA]</scope>
    <source>
        <strain>ATCC MYA-4620 / CBS 123657 / FGSC 9075 / NRRL 31084 / PH-1</strain>
    </source>
</reference>
<reference key="4">
    <citation type="journal article" date="2018" name="J. Am. Chem. Soc.">
        <title>Gramillin A and B: cyclic lipopeptides identified as the nonribosomal biosynthetic products of Fusarium graminearum.</title>
        <authorList>
            <person name="Bahadoor A."/>
            <person name="Brauer E.K."/>
            <person name="Bosnich W."/>
            <person name="Schneiderman D."/>
            <person name="Johnston A."/>
            <person name="Aubin Y."/>
            <person name="Blackwell B."/>
            <person name="Melanson J.E."/>
            <person name="Harris L.J."/>
        </authorList>
    </citation>
    <scope>FUNCTION</scope>
    <scope>PATHWAY</scope>
</reference>
<sequence length="282" mass="30933">MAPISSTRPSHSIAADNPNPTTQVNFNTNMTETTIFYKSHNPGGESILLIHGGFSDGSEWDGVWPLLAEHNYHLLLPDMPSHGNSVDIHPFEIDDTVRRLAALIKAEARGGLAHVVGISIGGHIAAALASQHPSCVLSLIVSGFNIFTPNLFTPVLPLFVYGVQRGSGFARQPFAEWDRFCRGLGSLALTQDVFNILISSRELQTIECRTLVVAATRPGVSADNIDHSRRLFETVVAGNGSQVVQHRGMRHPWNEEEPKVFADMVKRWIITQELPDGFEVIP</sequence>
<protein>
    <recommendedName>
        <fullName evidence="4">AB hydrolase superfamily protein FGSG_00045</fullName>
        <ecNumber evidence="6">3.-.-.-</ecNumber>
    </recommendedName>
    <alternativeName>
        <fullName evidence="4">Gramillins biosynthetic cluster protein FGSG_00045</fullName>
    </alternativeName>
</protein>
<feature type="chain" id="PRO_0000450581" description="AB hydrolase superfamily protein FGSG_00045">
    <location>
        <begin position="1"/>
        <end position="282"/>
    </location>
</feature>
<feature type="domain" description="AB hydrolase-1" evidence="1">
    <location>
        <begin position="22"/>
        <end position="270"/>
    </location>
</feature>
<feature type="region of interest" description="Disordered" evidence="2">
    <location>
        <begin position="1"/>
        <end position="22"/>
    </location>
</feature>
<feature type="compositionally biased region" description="Polar residues" evidence="2">
    <location>
        <begin position="1"/>
        <end position="10"/>
    </location>
</feature>
<gene>
    <name type="ORF">FGRAMPH1_01T00149</name>
    <name type="ORF">FGSG_00045</name>
</gene>
<dbReference type="EC" id="3.-.-.-" evidence="6"/>
<dbReference type="EMBL" id="HG970332">
    <property type="protein sequence ID" value="CEF71874.1"/>
    <property type="molecule type" value="Genomic_DNA"/>
</dbReference>
<dbReference type="RefSeq" id="XP_011315634.1">
    <property type="nucleotide sequence ID" value="XM_011317332.1"/>
</dbReference>
<dbReference type="SMR" id="I1R9B2"/>
<dbReference type="STRING" id="229533.I1R9B2"/>
<dbReference type="ESTHER" id="gibze-q4irw3">
    <property type="family name" value="AlphaBeta_hydrolase"/>
</dbReference>
<dbReference type="GeneID" id="23547561"/>
<dbReference type="KEGG" id="fgr:FGSG_00045"/>
<dbReference type="VEuPathDB" id="FungiDB:FGRAMPH1_01G00149"/>
<dbReference type="eggNOG" id="ENOG502SHW6">
    <property type="taxonomic scope" value="Eukaryota"/>
</dbReference>
<dbReference type="HOGENOM" id="CLU_057358_0_0_1"/>
<dbReference type="InParanoid" id="I1R9B2"/>
<dbReference type="OrthoDB" id="5911at110618"/>
<dbReference type="Proteomes" id="UP000070720">
    <property type="component" value="Chromosome 1"/>
</dbReference>
<dbReference type="GO" id="GO:0016787">
    <property type="term" value="F:hydrolase activity"/>
    <property type="evidence" value="ECO:0007669"/>
    <property type="project" value="UniProtKB-KW"/>
</dbReference>
<dbReference type="Gene3D" id="3.40.50.1820">
    <property type="entry name" value="alpha/beta hydrolase"/>
    <property type="match status" value="1"/>
</dbReference>
<dbReference type="InterPro" id="IPR000073">
    <property type="entry name" value="AB_hydrolase_1"/>
</dbReference>
<dbReference type="InterPro" id="IPR029058">
    <property type="entry name" value="AB_hydrolase_fold"/>
</dbReference>
<dbReference type="InterPro" id="IPR050266">
    <property type="entry name" value="AB_hydrolase_sf"/>
</dbReference>
<dbReference type="PANTHER" id="PTHR43798">
    <property type="entry name" value="MONOACYLGLYCEROL LIPASE"/>
    <property type="match status" value="1"/>
</dbReference>
<dbReference type="Pfam" id="PF12697">
    <property type="entry name" value="Abhydrolase_6"/>
    <property type="match status" value="1"/>
</dbReference>
<dbReference type="PRINTS" id="PR00111">
    <property type="entry name" value="ABHYDROLASE"/>
</dbReference>
<dbReference type="SUPFAM" id="SSF53474">
    <property type="entry name" value="alpha/beta-Hydrolases"/>
    <property type="match status" value="1"/>
</dbReference>
<comment type="function">
    <text evidence="3 6">AB hydrolase superfamily protein; part of the gene cluster that mediates the biosynthesis of gramillins A and B, bicyclic lipopeptides that induce cell death in maize leaves but not in wheat leaves (PubMed:30395461). The nonribosomal peptide synthetase GRA1 incorporates respectively a glutamic adic (Glu), a leucine (Leu), a serine (Ser), a hydroxyglutamine (HOGln), a 2-amino decanoic acid, and 2 cysteins (CysB and CysA) (Probable). The biosynthesis of 2-amino decanoic acid incorporated in gramillins could be initiated by a fatty acid synthase composed of the alpha and beta subunits FGSG_00036 and FGSG_11656 (Probable). The cytochrome P450 monooxygenase FGSG_15680 could hydroxylate the fatty acid chain (Probable). Subsequent oxidation to the ketone by the oxidoreductase FGSG_00048 and transamination by aminotransferase FGSG_00049 could form 2-amino-decanoic acid (Probable). On the other hand, FGSG_15680 could also be responsible for the HO-modified glutamine at the gamma-position (Probable). Whether hydroxylation occurs on the fully assembled product or on the Gln residue prior to assembly into the gramillins requires further proof (Probable). The thioredoxin FGSG_00043 could also be required for the disulfide-bond formation between CysA and CysB (Probable). The specific involvement of the remaining proteins from the cluster is more difficult to discern, but could have broader regulatory (FGSG_00040 and FGSG_11657) or enzymatic functions (FGSG_00044 and FGSG_00045) (Probable). The final C-domain of GRA1 does not possess the expected sequence of a termination CT domain, often implicated in macrocyclization and release of a cyclopeptidein fungal NRPs; and the thioesterase FGSG_00047 may act in concert with the terminal C-domain of GRA1 to catalyze the formation of the macrocyclic anhydride and release of the products (Probable).</text>
</comment>
<comment type="pathway">
    <text evidence="6">Mycotoxin biosynthesis.</text>
</comment>
<comment type="similarity">
    <text evidence="5">Belongs to the AB hydrolase superfamily.</text>
</comment>
<evidence type="ECO:0000255" key="1"/>
<evidence type="ECO:0000256" key="2">
    <source>
        <dbReference type="SAM" id="MobiDB-lite"/>
    </source>
</evidence>
<evidence type="ECO:0000269" key="3">
    <source>
    </source>
</evidence>
<evidence type="ECO:0000303" key="4">
    <source>
    </source>
</evidence>
<evidence type="ECO:0000305" key="5"/>
<evidence type="ECO:0000305" key="6">
    <source>
    </source>
</evidence>